<reference key="1">
    <citation type="journal article" date="1990" name="Gene">
        <title>Primary structure of rat secretory acid phosphatase and comparison to other acid phosphatases.</title>
        <authorList>
            <person name="Roiko K."/>
            <person name="Jaenne O.A."/>
            <person name="Vihko P."/>
        </authorList>
    </citation>
    <scope>NUCLEOTIDE SEQUENCE [MRNA] (ISOFORM 1)</scope>
    <source>
        <tissue>Prostate</tissue>
    </source>
</reference>
<reference key="2">
    <citation type="journal article" date="2007" name="Cancer Res.">
        <title>Prostatic acid phosphatase is not a prostate specific target.</title>
        <authorList>
            <person name="Quintero I.B."/>
            <person name="Araujo C.L."/>
            <person name="Pulkka A.E."/>
            <person name="Wirkkala R.S."/>
            <person name="Herrala A.M."/>
            <person name="Eskelinen E.-L."/>
            <person name="Jokitalo E."/>
            <person name="Hellstroem P.A."/>
            <person name="Tuominen H.J."/>
            <person name="Hirvikoski P.P."/>
            <person name="Vihko P.T."/>
        </authorList>
    </citation>
    <scope>NUCLEOTIDE SEQUENCE [MRNA] (ISOFORM 2)</scope>
    <source>
        <strain>Sprague-Dawley</strain>
    </source>
</reference>
<reference key="3">
    <citation type="journal article" date="2004" name="Nature">
        <title>Genome sequence of the Brown Norway rat yields insights into mammalian evolution.</title>
        <authorList>
            <person name="Gibbs R.A."/>
            <person name="Weinstock G.M."/>
            <person name="Metzker M.L."/>
            <person name="Muzny D.M."/>
            <person name="Sodergren E.J."/>
            <person name="Scherer S."/>
            <person name="Scott G."/>
            <person name="Steffen D."/>
            <person name="Worley K.C."/>
            <person name="Burch P.E."/>
            <person name="Okwuonu G."/>
            <person name="Hines S."/>
            <person name="Lewis L."/>
            <person name="Deramo C."/>
            <person name="Delgado O."/>
            <person name="Dugan-Rocha S."/>
            <person name="Miner G."/>
            <person name="Morgan M."/>
            <person name="Hawes A."/>
            <person name="Gill R."/>
            <person name="Holt R.A."/>
            <person name="Adams M.D."/>
            <person name="Amanatides P.G."/>
            <person name="Baden-Tillson H."/>
            <person name="Barnstead M."/>
            <person name="Chin S."/>
            <person name="Evans C.A."/>
            <person name="Ferriera S."/>
            <person name="Fosler C."/>
            <person name="Glodek A."/>
            <person name="Gu Z."/>
            <person name="Jennings D."/>
            <person name="Kraft C.L."/>
            <person name="Nguyen T."/>
            <person name="Pfannkoch C.M."/>
            <person name="Sitter C."/>
            <person name="Sutton G.G."/>
            <person name="Venter J.C."/>
            <person name="Woodage T."/>
            <person name="Smith D."/>
            <person name="Lee H.-M."/>
            <person name="Gustafson E."/>
            <person name="Cahill P."/>
            <person name="Kana A."/>
            <person name="Doucette-Stamm L."/>
            <person name="Weinstock K."/>
            <person name="Fechtel K."/>
            <person name="Weiss R.B."/>
            <person name="Dunn D.M."/>
            <person name="Green E.D."/>
            <person name="Blakesley R.W."/>
            <person name="Bouffard G.G."/>
            <person name="De Jong P.J."/>
            <person name="Osoegawa K."/>
            <person name="Zhu B."/>
            <person name="Marra M."/>
            <person name="Schein J."/>
            <person name="Bosdet I."/>
            <person name="Fjell C."/>
            <person name="Jones S."/>
            <person name="Krzywinski M."/>
            <person name="Mathewson C."/>
            <person name="Siddiqui A."/>
            <person name="Wye N."/>
            <person name="McPherson J."/>
            <person name="Zhao S."/>
            <person name="Fraser C.M."/>
            <person name="Shetty J."/>
            <person name="Shatsman S."/>
            <person name="Geer K."/>
            <person name="Chen Y."/>
            <person name="Abramzon S."/>
            <person name="Nierman W.C."/>
            <person name="Havlak P.H."/>
            <person name="Chen R."/>
            <person name="Durbin K.J."/>
            <person name="Egan A."/>
            <person name="Ren Y."/>
            <person name="Song X.-Z."/>
            <person name="Li B."/>
            <person name="Liu Y."/>
            <person name="Qin X."/>
            <person name="Cawley S."/>
            <person name="Cooney A.J."/>
            <person name="D'Souza L.M."/>
            <person name="Martin K."/>
            <person name="Wu J.Q."/>
            <person name="Gonzalez-Garay M.L."/>
            <person name="Jackson A.R."/>
            <person name="Kalafus K.J."/>
            <person name="McLeod M.P."/>
            <person name="Milosavljevic A."/>
            <person name="Virk D."/>
            <person name="Volkov A."/>
            <person name="Wheeler D.A."/>
            <person name="Zhang Z."/>
            <person name="Bailey J.A."/>
            <person name="Eichler E.E."/>
            <person name="Tuzun E."/>
            <person name="Birney E."/>
            <person name="Mongin E."/>
            <person name="Ureta-Vidal A."/>
            <person name="Woodwark C."/>
            <person name="Zdobnov E."/>
            <person name="Bork P."/>
            <person name="Suyama M."/>
            <person name="Torrents D."/>
            <person name="Alexandersson M."/>
            <person name="Trask B.J."/>
            <person name="Young J.M."/>
            <person name="Huang H."/>
            <person name="Wang H."/>
            <person name="Xing H."/>
            <person name="Daniels S."/>
            <person name="Gietzen D."/>
            <person name="Schmidt J."/>
            <person name="Stevens K."/>
            <person name="Vitt U."/>
            <person name="Wingrove J."/>
            <person name="Camara F."/>
            <person name="Mar Alba M."/>
            <person name="Abril J.F."/>
            <person name="Guigo R."/>
            <person name="Smit A."/>
            <person name="Dubchak I."/>
            <person name="Rubin E.M."/>
            <person name="Couronne O."/>
            <person name="Poliakov A."/>
            <person name="Huebner N."/>
            <person name="Ganten D."/>
            <person name="Goesele C."/>
            <person name="Hummel O."/>
            <person name="Kreitler T."/>
            <person name="Lee Y.-A."/>
            <person name="Monti J."/>
            <person name="Schulz H."/>
            <person name="Zimdahl H."/>
            <person name="Himmelbauer H."/>
            <person name="Lehrach H."/>
            <person name="Jacob H.J."/>
            <person name="Bromberg S."/>
            <person name="Gullings-Handley J."/>
            <person name="Jensen-Seaman M.I."/>
            <person name="Kwitek A.E."/>
            <person name="Lazar J."/>
            <person name="Pasko D."/>
            <person name="Tonellato P.J."/>
            <person name="Twigger S."/>
            <person name="Ponting C.P."/>
            <person name="Duarte J.M."/>
            <person name="Rice S."/>
            <person name="Goodstadt L."/>
            <person name="Beatson S.A."/>
            <person name="Emes R.D."/>
            <person name="Winter E.E."/>
            <person name="Webber C."/>
            <person name="Brandt P."/>
            <person name="Nyakatura G."/>
            <person name="Adetobi M."/>
            <person name="Chiaromonte F."/>
            <person name="Elnitski L."/>
            <person name="Eswara P."/>
            <person name="Hardison R.C."/>
            <person name="Hou M."/>
            <person name="Kolbe D."/>
            <person name="Makova K."/>
            <person name="Miller W."/>
            <person name="Nekrutenko A."/>
            <person name="Riemer C."/>
            <person name="Schwartz S."/>
            <person name="Taylor J."/>
            <person name="Yang S."/>
            <person name="Zhang Y."/>
            <person name="Lindpaintner K."/>
            <person name="Andrews T.D."/>
            <person name="Caccamo M."/>
            <person name="Clamp M."/>
            <person name="Clarke L."/>
            <person name="Curwen V."/>
            <person name="Durbin R.M."/>
            <person name="Eyras E."/>
            <person name="Searle S.M."/>
            <person name="Cooper G.M."/>
            <person name="Batzoglou S."/>
            <person name="Brudno M."/>
            <person name="Sidow A."/>
            <person name="Stone E.A."/>
            <person name="Payseur B.A."/>
            <person name="Bourque G."/>
            <person name="Lopez-Otin C."/>
            <person name="Puente X.S."/>
            <person name="Chakrabarti K."/>
            <person name="Chatterji S."/>
            <person name="Dewey C."/>
            <person name="Pachter L."/>
            <person name="Bray N."/>
            <person name="Yap V.B."/>
            <person name="Caspi A."/>
            <person name="Tesler G."/>
            <person name="Pevzner P.A."/>
            <person name="Haussler D."/>
            <person name="Roskin K.M."/>
            <person name="Baertsch R."/>
            <person name="Clawson H."/>
            <person name="Furey T.S."/>
            <person name="Hinrichs A.S."/>
            <person name="Karolchik D."/>
            <person name="Kent W.J."/>
            <person name="Rosenbloom K.R."/>
            <person name="Trumbower H."/>
            <person name="Weirauch M."/>
            <person name="Cooper D.N."/>
            <person name="Stenson P.D."/>
            <person name="Ma B."/>
            <person name="Brent M."/>
            <person name="Arumugam M."/>
            <person name="Shteynberg D."/>
            <person name="Copley R.R."/>
            <person name="Taylor M.S."/>
            <person name="Riethman H."/>
            <person name="Mudunuri U."/>
            <person name="Peterson J."/>
            <person name="Guyer M."/>
            <person name="Felsenfeld A."/>
            <person name="Old S."/>
            <person name="Mockrin S."/>
            <person name="Collins F.S."/>
        </authorList>
    </citation>
    <scope>NUCLEOTIDE SEQUENCE [LARGE SCALE GENOMIC DNA]</scope>
    <source>
        <strain>Brown Norway</strain>
    </source>
</reference>
<reference key="4">
    <citation type="journal article" date="1986" name="Neurosci. Lett.">
        <title>The localization of fluoride-resistant acid phosphatase (FRAP) in the pelvic nerves and sacral spinal cord of rats.</title>
        <authorList>
            <person name="McMahon S.B."/>
        </authorList>
    </citation>
    <scope>TISSUE SPECIFICITY</scope>
</reference>
<reference key="5">
    <citation type="journal article" date="1994" name="J. Biol. Chem.">
        <title>Site-directed mutagenesis of prostatic acid phosphatase. Catalytically important aspartic acid 258, substrate specificity, and oligomerization.</title>
        <authorList>
            <person name="Porvari K.S."/>
            <person name="Herrala A.M."/>
            <person name="Kurkela R.M."/>
            <person name="Taavitsainen P.A."/>
            <person name="Lindqvist Y."/>
            <person name="Schneider G."/>
            <person name="Vihko P.T."/>
        </authorList>
    </citation>
    <scope>CATALYTIC ACTIVITY</scope>
    <scope>FUNCTION</scope>
    <scope>ACTIVE SITE</scope>
    <scope>SUBUNIT</scope>
    <scope>ACTIVITY REGULATION</scope>
    <scope>SUBSTRATE SPECIFICITY</scope>
    <scope>MUTAGENESIS OF TRP-137; HIS-143; TYR-154; ARG-158 AND ASP-289</scope>
</reference>
<reference key="6">
    <citation type="journal article" date="2010" name="PLoS ONE">
        <title>Prostatic acid phosphatase is expressed in peptidergic and nonpeptidergic nociceptive neurons of mice and rats.</title>
        <authorList>
            <person name="Taylor-Blake B."/>
            <person name="Zylka M.J."/>
        </authorList>
    </citation>
    <scope>TISSUE SPECIFICITY</scope>
</reference>
<reference key="7">
    <citation type="journal article" date="1993" name="EMBO J.">
        <title>Three-dimensional structure of rat acid phosphatase.</title>
        <authorList>
            <person name="Schneider G."/>
            <person name="Lindqvist Y."/>
            <person name="Vihko P."/>
        </authorList>
    </citation>
    <scope>X-RAY CRYSTALLOGRAPHY (3.0 ANGSTROMS)</scope>
    <scope>SUBUNIT</scope>
    <scope>GLYCOSYLATION AT ASN-93 AND ASN-332</scope>
</reference>
<reference key="8">
    <citation type="journal article" date="1993" name="J. Biol. Chem.">
        <title>Three-dimensional structure of rat acid phosphatase in complex with L(+)-tartrate.</title>
        <authorList>
            <person name="Lindqvist Y."/>
            <person name="Schneider G."/>
            <person name="Vihko P."/>
        </authorList>
    </citation>
    <scope>X-RAY CRYSTALLOGRAPHY (3.0 ANGSTROMS) IN COMPLEX WITH L(+)-TARTRATE</scope>
    <scope>GLYCOSYLATION AT ASN-93 AND ASN-332</scope>
</reference>
<name>PPAP_RAT</name>
<protein>
    <recommendedName>
        <fullName>Prostatic acid phosphatase</fullName>
        <ecNumber evidence="7">3.1.3.2</ecNumber>
    </recommendedName>
    <alternativeName>
        <fullName>5'-nucleotidase</fullName>
        <shortName>5'-NT</shortName>
        <ecNumber evidence="2">3.1.3.5</ecNumber>
    </alternativeName>
    <alternativeName>
        <fullName>Acid phosphatase 3</fullName>
    </alternativeName>
    <alternativeName>
        <fullName>Ecto-5'-nucleotidase</fullName>
    </alternativeName>
    <alternativeName>
        <fullName evidence="11">Fluoride-resistant acid phosphatase</fullName>
        <shortName evidence="11">FRAP</shortName>
    </alternativeName>
    <alternativeName>
        <fullName>Protein tyrosine phosphatase ACP3</fullName>
        <ecNumber evidence="2">3.1.3.48</ecNumber>
    </alternativeName>
    <alternativeName>
        <fullName>Thiamine monophosphatase</fullName>
        <shortName>TMPase</shortName>
    </alternativeName>
</protein>
<gene>
    <name type="primary">Acp3</name>
    <name type="synonym">Acpp</name>
</gene>
<comment type="function">
    <molecule>Isoform 1</molecule>
    <text evidence="7">A non-specific tyrosine phosphatase that dephosphorylates a diverse number of substrates under acidic conditions (pH 4-6) including alkyl, aryl, and acyl orthophosphate monoesters and phosphorylated proteins. Has lipid phosphatase activity and inactivates lysophosphatidic acid in seminal plasma.</text>
</comment>
<comment type="function">
    <molecule>Isoform 2</molecule>
    <text evidence="3">In addition to its tyrosine phosphatase activity, also has ecto-5'-nucleotidase activity in dorsal root ganglion (DRG) neurons. Generates adenosine from AMP. This extracellular adenosine leads to a decrease in chronic pain by activating A1R in nociceptive neurons.</text>
</comment>
<comment type="catalytic activity">
    <reaction evidence="7">
        <text>a phosphate monoester + H2O = an alcohol + phosphate</text>
        <dbReference type="Rhea" id="RHEA:15017"/>
        <dbReference type="ChEBI" id="CHEBI:15377"/>
        <dbReference type="ChEBI" id="CHEBI:30879"/>
        <dbReference type="ChEBI" id="CHEBI:43474"/>
        <dbReference type="ChEBI" id="CHEBI:67140"/>
        <dbReference type="EC" id="3.1.3.2"/>
    </reaction>
</comment>
<comment type="catalytic activity">
    <reaction evidence="3">
        <text>a ribonucleoside 5'-phosphate + H2O = a ribonucleoside + phosphate</text>
        <dbReference type="Rhea" id="RHEA:12484"/>
        <dbReference type="ChEBI" id="CHEBI:15377"/>
        <dbReference type="ChEBI" id="CHEBI:18254"/>
        <dbReference type="ChEBI" id="CHEBI:43474"/>
        <dbReference type="ChEBI" id="CHEBI:58043"/>
        <dbReference type="EC" id="3.1.3.5"/>
    </reaction>
</comment>
<comment type="catalytic activity">
    <reaction evidence="2">
        <text>1-(9Z-octadecenoyl)-sn-glycero-3-phosphate + H2O = 1-(9Z-octadecenoyl)-sn-glycerol + phosphate</text>
        <dbReference type="Rhea" id="RHEA:39835"/>
        <dbReference type="ChEBI" id="CHEBI:15377"/>
        <dbReference type="ChEBI" id="CHEBI:43474"/>
        <dbReference type="ChEBI" id="CHEBI:74544"/>
        <dbReference type="ChEBI" id="CHEBI:75757"/>
    </reaction>
    <physiologicalReaction direction="left-to-right" evidence="2">
        <dbReference type="Rhea" id="RHEA:39836"/>
    </physiologicalReaction>
</comment>
<comment type="catalytic activity">
    <reaction evidence="2">
        <text>O-phospho-L-tyrosyl-[protein] + H2O = L-tyrosyl-[protein] + phosphate</text>
        <dbReference type="Rhea" id="RHEA:10684"/>
        <dbReference type="Rhea" id="RHEA-COMP:10136"/>
        <dbReference type="Rhea" id="RHEA-COMP:20101"/>
        <dbReference type="ChEBI" id="CHEBI:15377"/>
        <dbReference type="ChEBI" id="CHEBI:43474"/>
        <dbReference type="ChEBI" id="CHEBI:46858"/>
        <dbReference type="ChEBI" id="CHEBI:61978"/>
        <dbReference type="EC" id="3.1.3.48"/>
    </reaction>
</comment>
<comment type="activity regulation">
    <text evidence="7">Inhibited by L(+)-tartrate.</text>
</comment>
<comment type="subunit">
    <text evidence="7 8 9">Homodimer; dimer formation is required for phosphatase activity.</text>
</comment>
<comment type="subcellular location">
    <molecule>Isoform 1</molecule>
    <subcellularLocation>
        <location evidence="2">Secreted</location>
    </subcellularLocation>
</comment>
<comment type="subcellular location">
    <molecule>Isoform 2</molecule>
    <subcellularLocation>
        <location evidence="2">Cell membrane</location>
        <topology evidence="4">Single-pass type I membrane protein</topology>
    </subcellularLocation>
    <subcellularLocation>
        <location evidence="2">Lysosome membrane</location>
        <topology evidence="4">Single-pass type I membrane protein</topology>
    </subcellularLocation>
    <text evidence="2">Appears to shuttle between the cell membrane and intracellular vesicles. Colocalizes with FLOT1 at cell membrane and in intracellular vesicles. Colocalizes with LAMP2 on the lysosome membrane.</text>
</comment>
<comment type="alternative products">
    <event type="alternative splicing"/>
    <isoform>
        <id>P20646-1</id>
        <name>1</name>
        <sequence type="displayed"/>
    </isoform>
    <isoform>
        <id>P20646-2</id>
        <name>2</name>
        <name>TMPase</name>
        <name>TM-PAP</name>
        <name>cellular PAP</name>
        <name>cPAP</name>
        <sequence type="described" ref="VSP_036025"/>
    </isoform>
</comment>
<comment type="tissue specificity">
    <text evidence="5 6">Expressed in prostate epithelium. Also expressed in the pelvic nerve and sacral spinal cord. Localizes in peptidergic and non-peptidergic nociceptive (pain-sensing) neurons.</text>
</comment>
<comment type="PTM">
    <text evidence="8 9">N-glycosylated.</text>
</comment>
<comment type="similarity">
    <text evidence="12">Belongs to the histidine acid phosphatase family.</text>
</comment>
<evidence type="ECO:0000250" key="1"/>
<evidence type="ECO:0000250" key="2">
    <source>
        <dbReference type="UniProtKB" id="P15309"/>
    </source>
</evidence>
<evidence type="ECO:0000250" key="3">
    <source>
        <dbReference type="UniProtKB" id="Q8CE08"/>
    </source>
</evidence>
<evidence type="ECO:0000255" key="4"/>
<evidence type="ECO:0000269" key="5">
    <source>
    </source>
</evidence>
<evidence type="ECO:0000269" key="6">
    <source>
    </source>
</evidence>
<evidence type="ECO:0000269" key="7">
    <source>
    </source>
</evidence>
<evidence type="ECO:0000269" key="8">
    <source>
    </source>
</evidence>
<evidence type="ECO:0000269" key="9">
    <source>
    </source>
</evidence>
<evidence type="ECO:0000303" key="10">
    <source>
    </source>
</evidence>
<evidence type="ECO:0000303" key="11">
    <source>
    </source>
</evidence>
<evidence type="ECO:0000305" key="12"/>
<evidence type="ECO:0000305" key="13">
    <source>
    </source>
</evidence>
<evidence type="ECO:0007829" key="14">
    <source>
        <dbReference type="PDB" id="1RPA"/>
    </source>
</evidence>
<evidence type="ECO:0007829" key="15">
    <source>
        <dbReference type="PDB" id="1RPT"/>
    </source>
</evidence>
<sequence>MRAVPLHLVGTASLTLGFLLLLSLRLDPGQAKELKFVTLVFRHGDRGPIETFPNDPIKESSWPQGFGQLTKWGMGQHYELGSYIRRRYGRFLNNSYKHDQVYIRSTDVDRTLMSAMTNLAALFPPEGISIWNPRLLWQPIPVHTVSLSEDRLLYLPFRDCPRFQELKSETLKSEEFLKRLQPYKSFIDTLPSLSGFEDQDLFEIWSRLYDPLYCESVHNFTLPTWATEDAMTKLKELSELSLLSLYGIHKQKEKSRLQGGVLVNEILKNMKLATQPQKARKLIMYSAHDTTVSGLQMALDVYNGLLPPYASCHIMELYQDNGGHFVEMYYRNETQNEPYPLTLPGCTHSCPLEKFAELLDPVIPQDWATECMGTSNHQASL</sequence>
<keyword id="KW-0002">3D-structure</keyword>
<keyword id="KW-0025">Alternative splicing</keyword>
<keyword id="KW-1003">Cell membrane</keyword>
<keyword id="KW-1015">Disulfide bond</keyword>
<keyword id="KW-0325">Glycoprotein</keyword>
<keyword id="KW-0378">Hydrolase</keyword>
<keyword id="KW-0443">Lipid metabolism</keyword>
<keyword id="KW-0458">Lysosome</keyword>
<keyword id="KW-0472">Membrane</keyword>
<keyword id="KW-1185">Reference proteome</keyword>
<keyword id="KW-0964">Secreted</keyword>
<keyword id="KW-0732">Signal</keyword>
<feature type="signal peptide" evidence="2">
    <location>
        <begin position="1"/>
        <end position="31"/>
    </location>
</feature>
<feature type="chain" id="PRO_0000023964" description="Prostatic acid phosphatase">
    <location>
        <begin position="32"/>
        <end position="381"/>
    </location>
</feature>
<feature type="active site" description="Nucleophile" evidence="7">
    <location>
        <position position="43"/>
    </location>
</feature>
<feature type="active site" description="Proton donor" evidence="13">
    <location>
        <position position="289"/>
    </location>
</feature>
<feature type="binding site" evidence="2">
    <location>
        <position position="42"/>
    </location>
    <ligand>
        <name>substrate</name>
    </ligand>
</feature>
<feature type="binding site" evidence="2">
    <location>
        <position position="46"/>
    </location>
    <ligand>
        <name>substrate</name>
    </ligand>
</feature>
<feature type="binding site" evidence="2">
    <location>
        <position position="110"/>
    </location>
    <ligand>
        <name>substrate</name>
    </ligand>
</feature>
<feature type="binding site" evidence="2">
    <location>
        <position position="288"/>
    </location>
    <ligand>
        <name>substrate</name>
    </ligand>
</feature>
<feature type="site" description="Important for substrate specificity" evidence="1">
    <location>
        <position position="48"/>
    </location>
</feature>
<feature type="site" description="Required for dimerization" evidence="7">
    <location>
        <position position="137"/>
    </location>
</feature>
<feature type="site" description="Required for dimerization" evidence="7">
    <location>
        <position position="143"/>
    </location>
</feature>
<feature type="site" description="Required for structural stability" evidence="2">
    <location>
        <position position="205"/>
    </location>
</feature>
<feature type="glycosylation site" description="N-linked (GlcNAc...) asparagine" evidence="8 9">
    <location>
        <position position="93"/>
    </location>
</feature>
<feature type="glycosylation site" description="N-linked (GlcNAc...) asparagine" evidence="4">
    <location>
        <position position="219"/>
    </location>
</feature>
<feature type="glycosylation site" description="N-linked (GlcNAc...) asparagine" evidence="8 9">
    <location>
        <position position="332"/>
    </location>
</feature>
<feature type="disulfide bond" evidence="2">
    <location>
        <begin position="160"/>
        <end position="371"/>
    </location>
</feature>
<feature type="disulfide bond" evidence="2">
    <location>
        <begin position="214"/>
        <end position="312"/>
    </location>
</feature>
<feature type="disulfide bond" evidence="2">
    <location>
        <begin position="346"/>
        <end position="350"/>
    </location>
</feature>
<feature type="splice variant" id="VSP_036025" description="In isoform 2." evidence="10">
    <original>ASL</original>
    <variation>VLRVILATTFCLVTGILVILLLVLIRHGPCWQRDVYRNI</variation>
    <location>
        <begin position="379"/>
        <end position="381"/>
    </location>
</feature>
<feature type="mutagenesis site" description="Abolishes most of enzyme activity and dimer formation. No enzyme activity nor dimer formation; when associated with D-143." evidence="7">
    <original>W</original>
    <variation>E</variation>
    <location>
        <position position="137"/>
    </location>
</feature>
<feature type="mutagenesis site" description="Abolishes most of enzyme activity and dimer formation. No enzyme activity nor dimer formation; when associated with E-137." evidence="7">
    <original>H</original>
    <variation>D</variation>
    <location>
        <position position="143"/>
    </location>
</feature>
<feature type="mutagenesis site" description="PH optimum at 5.4 as for wild type and no change in specific activity. Lower pH maximum around 4.5 and more sensitive to L(+)tartrate inhibition but no change in specific activity; when associated with G-158." evidence="7">
    <original>Y</original>
    <variation>K</variation>
    <location>
        <position position="154"/>
    </location>
</feature>
<feature type="mutagenesis site" description="Broader pH maximum levels around 5.4 but no change in specific activity. Lower pH maximum around 4.5 and more sensitive to L(+)tartrate inhibition but no change in specific activity; when associated with K-154." evidence="7">
    <original>R</original>
    <variation>G</variation>
    <location>
        <position position="158"/>
    </location>
</feature>
<feature type="mutagenesis site" description="Abolishes almost all enzyme activity." evidence="7">
    <original>D</original>
    <variation>A</variation>
    <variation>S</variation>
    <location>
        <position position="289"/>
    </location>
</feature>
<feature type="mutagenesis site" description="Abolishes enzyme activity." evidence="7">
    <original>D</original>
    <variation>N</variation>
    <location>
        <position position="289"/>
    </location>
</feature>
<feature type="sequence conflict" description="In Ref. 1; AAA41806." evidence="12" ref="1">
    <original>LP</original>
    <variation>FR</variation>
    <location>
        <begin position="222"/>
        <end position="223"/>
    </location>
</feature>
<feature type="sequence conflict" description="In Ref. 1; AAA41806." evidence="12" ref="1">
    <original>H</original>
    <variation>Y</variation>
    <location>
        <position position="288"/>
    </location>
</feature>
<feature type="sequence conflict" description="In Ref. 1; AAA41806." evidence="12" ref="1">
    <original>DV</original>
    <variation>EL</variation>
    <location>
        <begin position="300"/>
        <end position="301"/>
    </location>
</feature>
<feature type="sequence conflict" description="In Ref. 1; AAA41806." evidence="12" ref="1">
    <original>H</original>
    <variation>T</variation>
    <location>
        <position position="324"/>
    </location>
</feature>
<feature type="strand" evidence="14">
    <location>
        <begin position="33"/>
        <end position="42"/>
    </location>
</feature>
<feature type="helix" evidence="14">
    <location>
        <begin position="59"/>
        <end position="61"/>
    </location>
</feature>
<feature type="strand" evidence="14">
    <location>
        <begin position="62"/>
        <end position="64"/>
    </location>
</feature>
<feature type="helix" evidence="14">
    <location>
        <begin position="71"/>
        <end position="88"/>
    </location>
</feature>
<feature type="helix" evidence="14">
    <location>
        <begin position="90"/>
        <end position="92"/>
    </location>
</feature>
<feature type="turn" evidence="14">
    <location>
        <begin position="98"/>
        <end position="100"/>
    </location>
</feature>
<feature type="strand" evidence="14">
    <location>
        <begin position="102"/>
        <end position="105"/>
    </location>
</feature>
<feature type="helix" evidence="14">
    <location>
        <begin position="109"/>
        <end position="122"/>
    </location>
</feature>
<feature type="helix" evidence="14">
    <location>
        <begin position="127"/>
        <end position="129"/>
    </location>
</feature>
<feature type="helix" evidence="14">
    <location>
        <begin position="147"/>
        <end position="149"/>
    </location>
</feature>
<feature type="strand" evidence="14">
    <location>
        <begin position="152"/>
        <end position="154"/>
    </location>
</feature>
<feature type="helix" evidence="14">
    <location>
        <begin position="161"/>
        <end position="172"/>
    </location>
</feature>
<feature type="helix" evidence="14">
    <location>
        <begin position="174"/>
        <end position="180"/>
    </location>
</feature>
<feature type="helix" evidence="14">
    <location>
        <begin position="181"/>
        <end position="183"/>
    </location>
</feature>
<feature type="helix" evidence="14">
    <location>
        <begin position="184"/>
        <end position="189"/>
    </location>
</feature>
<feature type="helix" evidence="14">
    <location>
        <begin position="191"/>
        <end position="194"/>
    </location>
</feature>
<feature type="helix" evidence="14">
    <location>
        <begin position="201"/>
        <end position="207"/>
    </location>
</feature>
<feature type="helix" evidence="14">
    <location>
        <begin position="209"/>
        <end position="216"/>
    </location>
</feature>
<feature type="turn" evidence="14">
    <location>
        <begin position="217"/>
        <end position="219"/>
    </location>
</feature>
<feature type="helix" evidence="14">
    <location>
        <begin position="228"/>
        <end position="246"/>
    </location>
</feature>
<feature type="strand" evidence="14">
    <location>
        <begin position="247"/>
        <end position="250"/>
    </location>
</feature>
<feature type="helix" evidence="14">
    <location>
        <begin position="251"/>
        <end position="256"/>
    </location>
</feature>
<feature type="helix" evidence="14">
    <location>
        <begin position="259"/>
        <end position="272"/>
    </location>
</feature>
<feature type="strand" evidence="15">
    <location>
        <begin position="275"/>
        <end position="277"/>
    </location>
</feature>
<feature type="strand" evidence="14">
    <location>
        <begin position="281"/>
        <end position="287"/>
    </location>
</feature>
<feature type="helix" evidence="14">
    <location>
        <begin position="289"/>
        <end position="299"/>
    </location>
</feature>
<feature type="strand" evidence="14">
    <location>
        <begin position="312"/>
        <end position="319"/>
    </location>
</feature>
<feature type="strand" evidence="14">
    <location>
        <begin position="321"/>
        <end position="331"/>
    </location>
</feature>
<feature type="strand" evidence="15">
    <location>
        <begin position="334"/>
        <end position="336"/>
    </location>
</feature>
<feature type="strand" evidence="14">
    <location>
        <begin position="348"/>
        <end position="351"/>
    </location>
</feature>
<feature type="helix" evidence="14">
    <location>
        <begin position="352"/>
        <end position="359"/>
    </location>
</feature>
<feature type="turn" evidence="14">
    <location>
        <begin position="360"/>
        <end position="362"/>
    </location>
</feature>
<feature type="helix" evidence="14">
    <location>
        <begin position="367"/>
        <end position="371"/>
    </location>
</feature>
<organism>
    <name type="scientific">Rattus norvegicus</name>
    <name type="common">Rat</name>
    <dbReference type="NCBI Taxonomy" id="10116"/>
    <lineage>
        <taxon>Eukaryota</taxon>
        <taxon>Metazoa</taxon>
        <taxon>Chordata</taxon>
        <taxon>Craniata</taxon>
        <taxon>Vertebrata</taxon>
        <taxon>Euteleostomi</taxon>
        <taxon>Mammalia</taxon>
        <taxon>Eutheria</taxon>
        <taxon>Euarchontoglires</taxon>
        <taxon>Glires</taxon>
        <taxon>Rodentia</taxon>
        <taxon>Myomorpha</taxon>
        <taxon>Muroidea</taxon>
        <taxon>Muridae</taxon>
        <taxon>Murinae</taxon>
        <taxon>Rattus</taxon>
    </lineage>
</organism>
<dbReference type="EC" id="3.1.3.2" evidence="7"/>
<dbReference type="EC" id="3.1.3.5" evidence="2"/>
<dbReference type="EC" id="3.1.3.48" evidence="2"/>
<dbReference type="EMBL" id="M32397">
    <property type="protein sequence ID" value="AAA41806.1"/>
    <property type="molecule type" value="mRNA"/>
</dbReference>
<dbReference type="EMBL" id="DQ826426">
    <property type="protein sequence ID" value="ABH07387.1"/>
    <property type="molecule type" value="mRNA"/>
</dbReference>
<dbReference type="EMBL" id="AABR07071383">
    <property type="status" value="NOT_ANNOTATED_CDS"/>
    <property type="molecule type" value="Genomic_DNA"/>
</dbReference>
<dbReference type="PIR" id="JH0152">
    <property type="entry name" value="JH0152"/>
</dbReference>
<dbReference type="RefSeq" id="NP_001128373.1">
    <molecule id="P20646-2"/>
    <property type="nucleotide sequence ID" value="NM_001134901.3"/>
</dbReference>
<dbReference type="RefSeq" id="NP_064457.2">
    <molecule id="P20646-1"/>
    <property type="nucleotide sequence ID" value="NM_020072.3"/>
</dbReference>
<dbReference type="PDB" id="1RPA">
    <property type="method" value="X-ray"/>
    <property type="resolution" value="3.00 A"/>
    <property type="chains" value="A=32-373"/>
</dbReference>
<dbReference type="PDB" id="1RPT">
    <property type="method" value="X-ray"/>
    <property type="resolution" value="3.00 A"/>
    <property type="chains" value="A=32-373"/>
</dbReference>
<dbReference type="PDBsum" id="1RPA"/>
<dbReference type="PDBsum" id="1RPT"/>
<dbReference type="SMR" id="P20646"/>
<dbReference type="FunCoup" id="P20646">
    <property type="interactions" value="479"/>
</dbReference>
<dbReference type="STRING" id="10116.ENSRNOP00000072975"/>
<dbReference type="GlyCosmos" id="P20646">
    <property type="glycosylation" value="3 sites, No reported glycans"/>
</dbReference>
<dbReference type="GlyGen" id="P20646">
    <property type="glycosylation" value="3 sites"/>
</dbReference>
<dbReference type="iPTMnet" id="P20646"/>
<dbReference type="PhosphoSitePlus" id="P20646"/>
<dbReference type="PaxDb" id="10116-ENSRNOP00000016222"/>
<dbReference type="Ensembl" id="ENSRNOT00000016222.6">
    <molecule id="P20646-1"/>
    <property type="protein sequence ID" value="ENSRNOP00000016222.5"/>
    <property type="gene ID" value="ENSRNOG00000011820.7"/>
</dbReference>
<dbReference type="Ensembl" id="ENSRNOT00000085585.2">
    <molecule id="P20646-2"/>
    <property type="protein sequence ID" value="ENSRNOP00000072975.1"/>
    <property type="gene ID" value="ENSRNOG00000011820.7"/>
</dbReference>
<dbReference type="GeneID" id="56780"/>
<dbReference type="KEGG" id="rno:56780"/>
<dbReference type="UCSC" id="RGD:2023">
    <molecule id="P20646-1"/>
    <property type="organism name" value="rat"/>
</dbReference>
<dbReference type="AGR" id="RGD:2023"/>
<dbReference type="CTD" id="55"/>
<dbReference type="RGD" id="2023">
    <property type="gene designation" value="Acp3"/>
</dbReference>
<dbReference type="eggNOG" id="KOG3720">
    <property type="taxonomic scope" value="Eukaryota"/>
</dbReference>
<dbReference type="GeneTree" id="ENSGT00940000160450"/>
<dbReference type="InParanoid" id="P20646"/>
<dbReference type="OMA" id="TYDTLHC"/>
<dbReference type="OrthoDB" id="258392at2759"/>
<dbReference type="PhylomeDB" id="P20646"/>
<dbReference type="TreeFam" id="TF312893"/>
<dbReference type="Reactome" id="R-RNO-6798695">
    <property type="pathway name" value="Neutrophil degranulation"/>
</dbReference>
<dbReference type="EvolutionaryTrace" id="P20646"/>
<dbReference type="PRO" id="PR:P20646"/>
<dbReference type="Proteomes" id="UP000002494">
    <property type="component" value="Chromosome 8"/>
</dbReference>
<dbReference type="Bgee" id="ENSRNOG00000011820">
    <property type="expression patterns" value="Expressed in esophagus and 14 other cell types or tissues"/>
</dbReference>
<dbReference type="GO" id="GO:0045177">
    <property type="term" value="C:apical part of cell"/>
    <property type="evidence" value="ECO:0000314"/>
    <property type="project" value="RGD"/>
</dbReference>
<dbReference type="GO" id="GO:0005615">
    <property type="term" value="C:extracellular space"/>
    <property type="evidence" value="ECO:0000266"/>
    <property type="project" value="RGD"/>
</dbReference>
<dbReference type="GO" id="GO:0030175">
    <property type="term" value="C:filopodium"/>
    <property type="evidence" value="ECO:0000266"/>
    <property type="project" value="RGD"/>
</dbReference>
<dbReference type="GO" id="GO:0031985">
    <property type="term" value="C:Golgi cisterna"/>
    <property type="evidence" value="ECO:0000314"/>
    <property type="project" value="RGD"/>
</dbReference>
<dbReference type="GO" id="GO:0005765">
    <property type="term" value="C:lysosomal membrane"/>
    <property type="evidence" value="ECO:0007669"/>
    <property type="project" value="UniProtKB-SubCell"/>
</dbReference>
<dbReference type="GO" id="GO:0016020">
    <property type="term" value="C:membrane"/>
    <property type="evidence" value="ECO:0000266"/>
    <property type="project" value="RGD"/>
</dbReference>
<dbReference type="GO" id="GO:0005771">
    <property type="term" value="C:multivesicular body"/>
    <property type="evidence" value="ECO:0000314"/>
    <property type="project" value="RGD"/>
</dbReference>
<dbReference type="GO" id="GO:0005886">
    <property type="term" value="C:plasma membrane"/>
    <property type="evidence" value="ECO:0000266"/>
    <property type="project" value="RGD"/>
</dbReference>
<dbReference type="GO" id="GO:0030141">
    <property type="term" value="C:secretory granule"/>
    <property type="evidence" value="ECO:0000314"/>
    <property type="project" value="RGD"/>
</dbReference>
<dbReference type="GO" id="GO:0012506">
    <property type="term" value="C:vesicle membrane"/>
    <property type="evidence" value="ECO:0000266"/>
    <property type="project" value="RGD"/>
</dbReference>
<dbReference type="GO" id="GO:0008253">
    <property type="term" value="F:5'-nucleotidase activity"/>
    <property type="evidence" value="ECO:0000266"/>
    <property type="project" value="RGD"/>
</dbReference>
<dbReference type="GO" id="GO:0003993">
    <property type="term" value="F:acid phosphatase activity"/>
    <property type="evidence" value="ECO:0000314"/>
    <property type="project" value="RGD"/>
</dbReference>
<dbReference type="GO" id="GO:0033265">
    <property type="term" value="F:choline binding"/>
    <property type="evidence" value="ECO:0000314"/>
    <property type="project" value="RGD"/>
</dbReference>
<dbReference type="GO" id="GO:0042802">
    <property type="term" value="F:identical protein binding"/>
    <property type="evidence" value="ECO:0000266"/>
    <property type="project" value="RGD"/>
</dbReference>
<dbReference type="GO" id="GO:0052642">
    <property type="term" value="F:lysophosphatidic acid phosphatase activity"/>
    <property type="evidence" value="ECO:0000266"/>
    <property type="project" value="RGD"/>
</dbReference>
<dbReference type="GO" id="GO:0060090">
    <property type="term" value="F:molecular adaptor activity"/>
    <property type="evidence" value="ECO:0000266"/>
    <property type="project" value="RGD"/>
</dbReference>
<dbReference type="GO" id="GO:0016791">
    <property type="term" value="F:phosphatase activity"/>
    <property type="evidence" value="ECO:0000266"/>
    <property type="project" value="RGD"/>
</dbReference>
<dbReference type="GO" id="GO:0042803">
    <property type="term" value="F:protein homodimerization activity"/>
    <property type="evidence" value="ECO:0000314"/>
    <property type="project" value="UniProtKB"/>
</dbReference>
<dbReference type="GO" id="GO:0004725">
    <property type="term" value="F:protein tyrosine phosphatase activity"/>
    <property type="evidence" value="ECO:0007669"/>
    <property type="project" value="UniProtKB-EC"/>
</dbReference>
<dbReference type="GO" id="GO:0042131">
    <property type="term" value="F:thiamine phosphate phosphatase activity"/>
    <property type="evidence" value="ECO:0000266"/>
    <property type="project" value="RGD"/>
</dbReference>
<dbReference type="GO" id="GO:0046085">
    <property type="term" value="P:adenosine metabolic process"/>
    <property type="evidence" value="ECO:0000266"/>
    <property type="project" value="RGD"/>
</dbReference>
<dbReference type="GO" id="GO:0006629">
    <property type="term" value="P:lipid metabolic process"/>
    <property type="evidence" value="ECO:0007669"/>
    <property type="project" value="UniProtKB-KW"/>
</dbReference>
<dbReference type="GO" id="GO:0009117">
    <property type="term" value="P:nucleotide metabolic process"/>
    <property type="evidence" value="ECO:0000266"/>
    <property type="project" value="RGD"/>
</dbReference>
<dbReference type="GO" id="GO:0060168">
    <property type="term" value="P:positive regulation of adenosine receptor signaling pathway"/>
    <property type="evidence" value="ECO:0000266"/>
    <property type="project" value="RGD"/>
</dbReference>
<dbReference type="GO" id="GO:0006144">
    <property type="term" value="P:purine nucleobase metabolic process"/>
    <property type="evidence" value="ECO:0000266"/>
    <property type="project" value="RGD"/>
</dbReference>
<dbReference type="GO" id="GO:0051930">
    <property type="term" value="P:regulation of sensory perception of pain"/>
    <property type="evidence" value="ECO:0000266"/>
    <property type="project" value="RGD"/>
</dbReference>
<dbReference type="GO" id="GO:0006772">
    <property type="term" value="P:thiamine metabolic process"/>
    <property type="evidence" value="ECO:0000266"/>
    <property type="project" value="RGD"/>
</dbReference>
<dbReference type="CDD" id="cd07061">
    <property type="entry name" value="HP_HAP_like"/>
    <property type="match status" value="1"/>
</dbReference>
<dbReference type="FunFam" id="3.40.50.1240:FF:000010">
    <property type="entry name" value="Prostatic acid phosphatase"/>
    <property type="match status" value="1"/>
</dbReference>
<dbReference type="Gene3D" id="3.40.50.1240">
    <property type="entry name" value="Phosphoglycerate mutase-like"/>
    <property type="match status" value="1"/>
</dbReference>
<dbReference type="InterPro" id="IPR033379">
    <property type="entry name" value="Acid_Pase_AS"/>
</dbReference>
<dbReference type="InterPro" id="IPR000560">
    <property type="entry name" value="His_Pase_clade-2"/>
</dbReference>
<dbReference type="InterPro" id="IPR029033">
    <property type="entry name" value="His_PPase_superfam"/>
</dbReference>
<dbReference type="InterPro" id="IPR050645">
    <property type="entry name" value="Histidine_acid_phosphatase"/>
</dbReference>
<dbReference type="PANTHER" id="PTHR11567">
    <property type="entry name" value="ACID PHOSPHATASE-RELATED"/>
    <property type="match status" value="1"/>
</dbReference>
<dbReference type="PANTHER" id="PTHR11567:SF211">
    <property type="entry name" value="PROSTATIC ACID PHOSPHATASE"/>
    <property type="match status" value="1"/>
</dbReference>
<dbReference type="Pfam" id="PF00328">
    <property type="entry name" value="His_Phos_2"/>
    <property type="match status" value="1"/>
</dbReference>
<dbReference type="SUPFAM" id="SSF53254">
    <property type="entry name" value="Phosphoglycerate mutase-like"/>
    <property type="match status" value="1"/>
</dbReference>
<dbReference type="PROSITE" id="PS00616">
    <property type="entry name" value="HIS_ACID_PHOSPHAT_1"/>
    <property type="match status" value="1"/>
</dbReference>
<dbReference type="PROSITE" id="PS00778">
    <property type="entry name" value="HIS_ACID_PHOSPHAT_2"/>
    <property type="match status" value="1"/>
</dbReference>
<accession>P20646</accession>
<accession>A0A0G2JSL5</accession>
<accession>A6XJQ5</accession>
<proteinExistence type="evidence at protein level"/>